<sequence>MKIGIVGCLGRMGRIIVQEVVGTGGVELSGGVVRRGNGLVGEDMGAVLGCGHGAKITDSKEFLFDCSDVVIDFSSPECMLECVGIASEKRVPLVSGTTGVDERDFRTHAEKVPLLWSCNMSLGVTLLLELVKMAAAGFRGYDVEIRELHHRAKKDAPSGTSLMLGKAVAQGMGVELESQQHTFGSGCRRSGAVGFSVARGGGVIGDHAVMFLGDDEIVELQHRAIDRRVFARGAIKAACWLVGKPAGLYTMSDVLRA</sequence>
<keyword id="KW-0028">Amino-acid biosynthesis</keyword>
<keyword id="KW-0963">Cytoplasm</keyword>
<keyword id="KW-0220">Diaminopimelate biosynthesis</keyword>
<keyword id="KW-0457">Lysine biosynthesis</keyword>
<keyword id="KW-0520">NAD</keyword>
<keyword id="KW-0521">NADP</keyword>
<keyword id="KW-0560">Oxidoreductase</keyword>
<reference key="1">
    <citation type="journal article" date="2005" name="Proc. Natl. Acad. Sci. U.S.A.">
        <title>Complete genome sequencing of Anaplasma marginale reveals that the surface is skewed to two superfamilies of outer membrane proteins.</title>
        <authorList>
            <person name="Brayton K.A."/>
            <person name="Kappmeyer L.S."/>
            <person name="Herndon D.R."/>
            <person name="Dark M.J."/>
            <person name="Tibbals D.L."/>
            <person name="Palmer G.H."/>
            <person name="McGuire T.C."/>
            <person name="Knowles D.P. Jr."/>
        </authorList>
    </citation>
    <scope>NUCLEOTIDE SEQUENCE [LARGE SCALE GENOMIC DNA]</scope>
    <source>
        <strain>St. Maries</strain>
    </source>
</reference>
<evidence type="ECO:0000255" key="1">
    <source>
        <dbReference type="HAMAP-Rule" id="MF_00102"/>
    </source>
</evidence>
<evidence type="ECO:0000305" key="2"/>
<protein>
    <recommendedName>
        <fullName evidence="1">4-hydroxy-tetrahydrodipicolinate reductase</fullName>
        <shortName evidence="1">HTPA reductase</shortName>
        <ecNumber evidence="1">1.17.1.8</ecNumber>
    </recommendedName>
</protein>
<name>DAPB_ANAMM</name>
<gene>
    <name evidence="1" type="primary">dapB</name>
    <name type="ordered locus">AM873</name>
</gene>
<dbReference type="EC" id="1.17.1.8" evidence="1"/>
<dbReference type="EMBL" id="CP000030">
    <property type="protein sequence ID" value="AAV86787.1"/>
    <property type="status" value="ALT_INIT"/>
    <property type="molecule type" value="Genomic_DNA"/>
</dbReference>
<dbReference type="RefSeq" id="WP_012880563.1">
    <property type="nucleotide sequence ID" value="NZ_AFMU01000035.1"/>
</dbReference>
<dbReference type="SMR" id="Q5PA93"/>
<dbReference type="KEGG" id="ama:AM873"/>
<dbReference type="HOGENOM" id="CLU_047479_2_2_5"/>
<dbReference type="UniPathway" id="UPA00034">
    <property type="reaction ID" value="UER00018"/>
</dbReference>
<dbReference type="GO" id="GO:0005737">
    <property type="term" value="C:cytoplasm"/>
    <property type="evidence" value="ECO:0007669"/>
    <property type="project" value="UniProtKB-SubCell"/>
</dbReference>
<dbReference type="GO" id="GO:0008839">
    <property type="term" value="F:4-hydroxy-tetrahydrodipicolinate reductase"/>
    <property type="evidence" value="ECO:0007669"/>
    <property type="project" value="UniProtKB-EC"/>
</dbReference>
<dbReference type="GO" id="GO:0051287">
    <property type="term" value="F:NAD binding"/>
    <property type="evidence" value="ECO:0007669"/>
    <property type="project" value="UniProtKB-UniRule"/>
</dbReference>
<dbReference type="GO" id="GO:0050661">
    <property type="term" value="F:NADP binding"/>
    <property type="evidence" value="ECO:0007669"/>
    <property type="project" value="UniProtKB-UniRule"/>
</dbReference>
<dbReference type="GO" id="GO:0016726">
    <property type="term" value="F:oxidoreductase activity, acting on CH or CH2 groups, NAD or NADP as acceptor"/>
    <property type="evidence" value="ECO:0007669"/>
    <property type="project" value="UniProtKB-UniRule"/>
</dbReference>
<dbReference type="GO" id="GO:0019877">
    <property type="term" value="P:diaminopimelate biosynthetic process"/>
    <property type="evidence" value="ECO:0007669"/>
    <property type="project" value="UniProtKB-UniRule"/>
</dbReference>
<dbReference type="GO" id="GO:0009089">
    <property type="term" value="P:lysine biosynthetic process via diaminopimelate"/>
    <property type="evidence" value="ECO:0007669"/>
    <property type="project" value="UniProtKB-UniRule"/>
</dbReference>
<dbReference type="CDD" id="cd02274">
    <property type="entry name" value="DHDPR_N"/>
    <property type="match status" value="1"/>
</dbReference>
<dbReference type="Gene3D" id="3.30.360.10">
    <property type="entry name" value="Dihydrodipicolinate Reductase, domain 2"/>
    <property type="match status" value="1"/>
</dbReference>
<dbReference type="Gene3D" id="3.40.50.720">
    <property type="entry name" value="NAD(P)-binding Rossmann-like Domain"/>
    <property type="match status" value="1"/>
</dbReference>
<dbReference type="HAMAP" id="MF_00102">
    <property type="entry name" value="DapB"/>
    <property type="match status" value="1"/>
</dbReference>
<dbReference type="InterPro" id="IPR022663">
    <property type="entry name" value="DapB_C"/>
</dbReference>
<dbReference type="InterPro" id="IPR000846">
    <property type="entry name" value="DapB_N"/>
</dbReference>
<dbReference type="InterPro" id="IPR022664">
    <property type="entry name" value="DapB_N_CS"/>
</dbReference>
<dbReference type="InterPro" id="IPR023940">
    <property type="entry name" value="DHDPR_bac"/>
</dbReference>
<dbReference type="InterPro" id="IPR036291">
    <property type="entry name" value="NAD(P)-bd_dom_sf"/>
</dbReference>
<dbReference type="NCBIfam" id="TIGR00036">
    <property type="entry name" value="dapB"/>
    <property type="match status" value="1"/>
</dbReference>
<dbReference type="PANTHER" id="PTHR20836:SF0">
    <property type="entry name" value="4-HYDROXY-TETRAHYDRODIPICOLINATE REDUCTASE 1, CHLOROPLASTIC-RELATED"/>
    <property type="match status" value="1"/>
</dbReference>
<dbReference type="PANTHER" id="PTHR20836">
    <property type="entry name" value="DIHYDRODIPICOLINATE REDUCTASE"/>
    <property type="match status" value="1"/>
</dbReference>
<dbReference type="Pfam" id="PF05173">
    <property type="entry name" value="DapB_C"/>
    <property type="match status" value="1"/>
</dbReference>
<dbReference type="Pfam" id="PF01113">
    <property type="entry name" value="DapB_N"/>
    <property type="match status" value="1"/>
</dbReference>
<dbReference type="PIRSF" id="PIRSF000161">
    <property type="entry name" value="DHPR"/>
    <property type="match status" value="1"/>
</dbReference>
<dbReference type="SUPFAM" id="SSF55347">
    <property type="entry name" value="Glyceraldehyde-3-phosphate dehydrogenase-like, C-terminal domain"/>
    <property type="match status" value="1"/>
</dbReference>
<dbReference type="SUPFAM" id="SSF51735">
    <property type="entry name" value="NAD(P)-binding Rossmann-fold domains"/>
    <property type="match status" value="1"/>
</dbReference>
<dbReference type="PROSITE" id="PS01298">
    <property type="entry name" value="DAPB"/>
    <property type="match status" value="1"/>
</dbReference>
<feature type="chain" id="PRO_0000228319" description="4-hydroxy-tetrahydrodipicolinate reductase">
    <location>
        <begin position="1"/>
        <end position="257"/>
    </location>
</feature>
<feature type="active site" description="Proton donor/acceptor" evidence="1">
    <location>
        <position position="149"/>
    </location>
</feature>
<feature type="active site" description="Proton donor" evidence="1">
    <location>
        <position position="153"/>
    </location>
</feature>
<feature type="binding site" evidence="1">
    <location>
        <begin position="7"/>
        <end position="12"/>
    </location>
    <ligand>
        <name>NAD(+)</name>
        <dbReference type="ChEBI" id="CHEBI:57540"/>
    </ligand>
</feature>
<feature type="binding site" evidence="1">
    <location>
        <position position="34"/>
    </location>
    <ligand>
        <name>NADP(+)</name>
        <dbReference type="ChEBI" id="CHEBI:58349"/>
    </ligand>
</feature>
<feature type="binding site" evidence="1">
    <location>
        <begin position="96"/>
        <end position="98"/>
    </location>
    <ligand>
        <name>NAD(+)</name>
        <dbReference type="ChEBI" id="CHEBI:57540"/>
    </ligand>
</feature>
<feature type="binding site" evidence="1">
    <location>
        <begin position="117"/>
        <end position="120"/>
    </location>
    <ligand>
        <name>NAD(+)</name>
        <dbReference type="ChEBI" id="CHEBI:57540"/>
    </ligand>
</feature>
<feature type="binding site" evidence="1">
    <location>
        <position position="150"/>
    </location>
    <ligand>
        <name>(S)-2,3,4,5-tetrahydrodipicolinate</name>
        <dbReference type="ChEBI" id="CHEBI:16845"/>
    </ligand>
</feature>
<feature type="binding site" evidence="1">
    <location>
        <begin position="159"/>
        <end position="160"/>
    </location>
    <ligand>
        <name>(S)-2,3,4,5-tetrahydrodipicolinate</name>
        <dbReference type="ChEBI" id="CHEBI:16845"/>
    </ligand>
</feature>
<proteinExistence type="inferred from homology"/>
<organism>
    <name type="scientific">Anaplasma marginale (strain St. Maries)</name>
    <dbReference type="NCBI Taxonomy" id="234826"/>
    <lineage>
        <taxon>Bacteria</taxon>
        <taxon>Pseudomonadati</taxon>
        <taxon>Pseudomonadota</taxon>
        <taxon>Alphaproteobacteria</taxon>
        <taxon>Rickettsiales</taxon>
        <taxon>Anaplasmataceae</taxon>
        <taxon>Anaplasma</taxon>
    </lineage>
</organism>
<comment type="function">
    <text evidence="1">Catalyzes the conversion of 4-hydroxy-tetrahydrodipicolinate (HTPA) to tetrahydrodipicolinate.</text>
</comment>
<comment type="catalytic activity">
    <reaction evidence="1">
        <text>(S)-2,3,4,5-tetrahydrodipicolinate + NAD(+) + H2O = (2S,4S)-4-hydroxy-2,3,4,5-tetrahydrodipicolinate + NADH + H(+)</text>
        <dbReference type="Rhea" id="RHEA:35323"/>
        <dbReference type="ChEBI" id="CHEBI:15377"/>
        <dbReference type="ChEBI" id="CHEBI:15378"/>
        <dbReference type="ChEBI" id="CHEBI:16845"/>
        <dbReference type="ChEBI" id="CHEBI:57540"/>
        <dbReference type="ChEBI" id="CHEBI:57945"/>
        <dbReference type="ChEBI" id="CHEBI:67139"/>
        <dbReference type="EC" id="1.17.1.8"/>
    </reaction>
</comment>
<comment type="catalytic activity">
    <reaction evidence="1">
        <text>(S)-2,3,4,5-tetrahydrodipicolinate + NADP(+) + H2O = (2S,4S)-4-hydroxy-2,3,4,5-tetrahydrodipicolinate + NADPH + H(+)</text>
        <dbReference type="Rhea" id="RHEA:35331"/>
        <dbReference type="ChEBI" id="CHEBI:15377"/>
        <dbReference type="ChEBI" id="CHEBI:15378"/>
        <dbReference type="ChEBI" id="CHEBI:16845"/>
        <dbReference type="ChEBI" id="CHEBI:57783"/>
        <dbReference type="ChEBI" id="CHEBI:58349"/>
        <dbReference type="ChEBI" id="CHEBI:67139"/>
        <dbReference type="EC" id="1.17.1.8"/>
    </reaction>
</comment>
<comment type="pathway">
    <text evidence="1">Amino-acid biosynthesis; L-lysine biosynthesis via DAP pathway; (S)-tetrahydrodipicolinate from L-aspartate: step 4/4.</text>
</comment>
<comment type="subcellular location">
    <subcellularLocation>
        <location evidence="1">Cytoplasm</location>
    </subcellularLocation>
</comment>
<comment type="similarity">
    <text evidence="1">Belongs to the DapB family.</text>
</comment>
<comment type="caution">
    <text evidence="2">Was originally thought to be a dihydrodipicolinate reductase (DHDPR), catalyzing the conversion of dihydrodipicolinate to tetrahydrodipicolinate. However, it was shown in E.coli that the substrate of the enzymatic reaction is not dihydrodipicolinate (DHDP) but in fact (2S,4S)-4-hydroxy-2,3,4,5-tetrahydrodipicolinic acid (HTPA), the product released by the DapA-catalyzed reaction.</text>
</comment>
<comment type="sequence caution" evidence="2">
    <conflict type="erroneous initiation">
        <sequence resource="EMBL-CDS" id="AAV86787"/>
    </conflict>
</comment>
<accession>Q5PA93</accession>